<accession>Q72PB6</accession>
<protein>
    <recommendedName>
        <fullName evidence="1">Apolipoprotein N-acyltransferase 1</fullName>
        <shortName evidence="1">ALP N-acyltransferase 1</shortName>
        <ecNumber evidence="1">2.3.1.269</ecNumber>
    </recommendedName>
</protein>
<evidence type="ECO:0000255" key="1">
    <source>
        <dbReference type="HAMAP-Rule" id="MF_01148"/>
    </source>
</evidence>
<keyword id="KW-0012">Acyltransferase</keyword>
<keyword id="KW-0997">Cell inner membrane</keyword>
<keyword id="KW-1003">Cell membrane</keyword>
<keyword id="KW-0472">Membrane</keyword>
<keyword id="KW-0808">Transferase</keyword>
<keyword id="KW-0812">Transmembrane</keyword>
<keyword id="KW-1133">Transmembrane helix</keyword>
<comment type="function">
    <text evidence="1">Catalyzes the phospholipid dependent N-acylation of the N-terminal cysteine of apolipoprotein, the last step in lipoprotein maturation.</text>
</comment>
<comment type="catalytic activity">
    <reaction evidence="1">
        <text>N-terminal S-1,2-diacyl-sn-glyceryl-L-cysteinyl-[lipoprotein] + a glycerophospholipid = N-acyl-S-1,2-diacyl-sn-glyceryl-L-cysteinyl-[lipoprotein] + a 2-acyl-sn-glycero-3-phospholipid + H(+)</text>
        <dbReference type="Rhea" id="RHEA:48228"/>
        <dbReference type="Rhea" id="RHEA-COMP:14681"/>
        <dbReference type="Rhea" id="RHEA-COMP:14684"/>
        <dbReference type="ChEBI" id="CHEBI:15378"/>
        <dbReference type="ChEBI" id="CHEBI:136912"/>
        <dbReference type="ChEBI" id="CHEBI:140656"/>
        <dbReference type="ChEBI" id="CHEBI:140657"/>
        <dbReference type="ChEBI" id="CHEBI:140660"/>
        <dbReference type="EC" id="2.3.1.269"/>
    </reaction>
</comment>
<comment type="pathway">
    <text evidence="1">Protein modification; lipoprotein biosynthesis (N-acyl transfer).</text>
</comment>
<comment type="subcellular location">
    <subcellularLocation>
        <location evidence="1">Cell inner membrane</location>
        <topology evidence="1">Multi-pass membrane protein</topology>
    </subcellularLocation>
</comment>
<comment type="similarity">
    <text evidence="1">Belongs to the CN hydrolase family. Apolipoprotein N-acyltransferase subfamily.</text>
</comment>
<proteinExistence type="inferred from homology"/>
<dbReference type="EC" id="2.3.1.269" evidence="1"/>
<dbReference type="EMBL" id="AE016823">
    <property type="protein sequence ID" value="AAS71120.1"/>
    <property type="molecule type" value="Genomic_DNA"/>
</dbReference>
<dbReference type="RefSeq" id="WP_000499626.1">
    <property type="nucleotide sequence ID" value="NC_005823.1"/>
</dbReference>
<dbReference type="SMR" id="Q72PB6"/>
<dbReference type="KEGG" id="lic:LIC_12556"/>
<dbReference type="HOGENOM" id="CLU_019563_3_1_12"/>
<dbReference type="UniPathway" id="UPA00666"/>
<dbReference type="Proteomes" id="UP000007037">
    <property type="component" value="Chromosome I"/>
</dbReference>
<dbReference type="GO" id="GO:0005886">
    <property type="term" value="C:plasma membrane"/>
    <property type="evidence" value="ECO:0007669"/>
    <property type="project" value="UniProtKB-SubCell"/>
</dbReference>
<dbReference type="GO" id="GO:0016410">
    <property type="term" value="F:N-acyltransferase activity"/>
    <property type="evidence" value="ECO:0007669"/>
    <property type="project" value="UniProtKB-UniRule"/>
</dbReference>
<dbReference type="GO" id="GO:0042158">
    <property type="term" value="P:lipoprotein biosynthetic process"/>
    <property type="evidence" value="ECO:0007669"/>
    <property type="project" value="UniProtKB-UniRule"/>
</dbReference>
<dbReference type="CDD" id="cd07571">
    <property type="entry name" value="ALP_N-acyl_transferase"/>
    <property type="match status" value="1"/>
</dbReference>
<dbReference type="Gene3D" id="3.60.110.10">
    <property type="entry name" value="Carbon-nitrogen hydrolase"/>
    <property type="match status" value="1"/>
</dbReference>
<dbReference type="HAMAP" id="MF_01148">
    <property type="entry name" value="Lnt"/>
    <property type="match status" value="1"/>
</dbReference>
<dbReference type="InterPro" id="IPR004563">
    <property type="entry name" value="Apolipo_AcylTrfase"/>
</dbReference>
<dbReference type="InterPro" id="IPR003010">
    <property type="entry name" value="C-N_Hydrolase"/>
</dbReference>
<dbReference type="InterPro" id="IPR036526">
    <property type="entry name" value="C-N_Hydrolase_sf"/>
</dbReference>
<dbReference type="InterPro" id="IPR045378">
    <property type="entry name" value="LNT_N"/>
</dbReference>
<dbReference type="PANTHER" id="PTHR38686">
    <property type="entry name" value="APOLIPOPROTEIN N-ACYLTRANSFERASE"/>
    <property type="match status" value="1"/>
</dbReference>
<dbReference type="PANTHER" id="PTHR38686:SF1">
    <property type="entry name" value="APOLIPOPROTEIN N-ACYLTRANSFERASE"/>
    <property type="match status" value="1"/>
</dbReference>
<dbReference type="Pfam" id="PF00795">
    <property type="entry name" value="CN_hydrolase"/>
    <property type="match status" value="1"/>
</dbReference>
<dbReference type="Pfam" id="PF20154">
    <property type="entry name" value="LNT_N"/>
    <property type="match status" value="1"/>
</dbReference>
<dbReference type="SUPFAM" id="SSF56317">
    <property type="entry name" value="Carbon-nitrogen hydrolase"/>
    <property type="match status" value="1"/>
</dbReference>
<dbReference type="PROSITE" id="PS50263">
    <property type="entry name" value="CN_HYDROLASE"/>
    <property type="match status" value="1"/>
</dbReference>
<feature type="chain" id="PRO_0000178072" description="Apolipoprotein N-acyltransferase 1">
    <location>
        <begin position="1"/>
        <end position="576"/>
    </location>
</feature>
<feature type="transmembrane region" description="Helical" evidence="1">
    <location>
        <begin position="15"/>
        <end position="35"/>
    </location>
</feature>
<feature type="transmembrane region" description="Helical" evidence="1">
    <location>
        <begin position="38"/>
        <end position="58"/>
    </location>
</feature>
<feature type="transmembrane region" description="Helical" evidence="1">
    <location>
        <begin position="60"/>
        <end position="80"/>
    </location>
</feature>
<feature type="transmembrane region" description="Helical" evidence="1">
    <location>
        <begin position="92"/>
        <end position="112"/>
    </location>
</feature>
<feature type="transmembrane region" description="Helical" evidence="1">
    <location>
        <begin position="128"/>
        <end position="148"/>
    </location>
</feature>
<feature type="transmembrane region" description="Helical" evidence="1">
    <location>
        <begin position="168"/>
        <end position="188"/>
    </location>
</feature>
<feature type="transmembrane region" description="Helical" evidence="1">
    <location>
        <begin position="204"/>
        <end position="224"/>
    </location>
</feature>
<feature type="transmembrane region" description="Helical" evidence="1">
    <location>
        <begin position="549"/>
        <end position="569"/>
    </location>
</feature>
<feature type="domain" description="CN hydrolase" evidence="1">
    <location>
        <begin position="236"/>
        <end position="538"/>
    </location>
</feature>
<feature type="active site" description="Proton acceptor" evidence="1">
    <location>
        <position position="285"/>
    </location>
</feature>
<feature type="active site" evidence="1">
    <location>
        <position position="355"/>
    </location>
</feature>
<feature type="active site" description="Nucleophile" evidence="1">
    <location>
        <position position="446"/>
    </location>
</feature>
<gene>
    <name evidence="1" type="primary">lnt1</name>
    <name type="ordered locus">LIC_12556</name>
</gene>
<name>LNT1_LEPIC</name>
<organism>
    <name type="scientific">Leptospira interrogans serogroup Icterohaemorrhagiae serovar copenhageni (strain Fiocruz L1-130)</name>
    <dbReference type="NCBI Taxonomy" id="267671"/>
    <lineage>
        <taxon>Bacteria</taxon>
        <taxon>Pseudomonadati</taxon>
        <taxon>Spirochaetota</taxon>
        <taxon>Spirochaetia</taxon>
        <taxon>Leptospirales</taxon>
        <taxon>Leptospiraceae</taxon>
        <taxon>Leptospira</taxon>
    </lineage>
</organism>
<reference key="1">
    <citation type="journal article" date="2004" name="J. Bacteriol.">
        <title>Comparative genomics of two Leptospira interrogans serovars reveals novel insights into physiology and pathogenesis.</title>
        <authorList>
            <person name="Nascimento A.L.T.O."/>
            <person name="Ko A.I."/>
            <person name="Martins E.A.L."/>
            <person name="Monteiro-Vitorello C.B."/>
            <person name="Ho P.L."/>
            <person name="Haake D.A."/>
            <person name="Verjovski-Almeida S."/>
            <person name="Hartskeerl R.A."/>
            <person name="Marques M.V."/>
            <person name="Oliveira M.C."/>
            <person name="Menck C.F.M."/>
            <person name="Leite L.C.C."/>
            <person name="Carrer H."/>
            <person name="Coutinho L.L."/>
            <person name="Degrave W.M."/>
            <person name="Dellagostin O.A."/>
            <person name="El-Dorry H."/>
            <person name="Ferro E.S."/>
            <person name="Ferro M.I.T."/>
            <person name="Furlan L.R."/>
            <person name="Gamberini M."/>
            <person name="Giglioti E.A."/>
            <person name="Goes-Neto A."/>
            <person name="Goldman G.H."/>
            <person name="Goldman M.H.S."/>
            <person name="Harakava R."/>
            <person name="Jeronimo S.M.B."/>
            <person name="Junqueira-de-Azevedo I.L.M."/>
            <person name="Kimura E.T."/>
            <person name="Kuramae E.E."/>
            <person name="Lemos E.G.M."/>
            <person name="Lemos M.V.F."/>
            <person name="Marino C.L."/>
            <person name="Nunes L.R."/>
            <person name="de Oliveira R.C."/>
            <person name="Pereira G.G."/>
            <person name="Reis M.S."/>
            <person name="Schriefer A."/>
            <person name="Siqueira W.J."/>
            <person name="Sommer P."/>
            <person name="Tsai S.M."/>
            <person name="Simpson A.J.G."/>
            <person name="Ferro J.A."/>
            <person name="Camargo L.E.A."/>
            <person name="Kitajima J.P."/>
            <person name="Setubal J.C."/>
            <person name="Van Sluys M.A."/>
        </authorList>
    </citation>
    <scope>NUCLEOTIDE SEQUENCE [LARGE SCALE GENOMIC DNA]</scope>
    <source>
        <strain>Fiocruz L1-130</strain>
    </source>
</reference>
<sequence>MFYNFISKDSILYRLILCFGIGIGTVFGLSPFSFFSAGVFASISCIFLFFSLNRTSIWKAFLWLLILSQILNFTAFYWIPGAISRISGANTFVSILFFFLYGLISHLKFFLFYTLFRFSKIDSASKTYILLIFPAAGTLSDMITFQIFPWYWGNLISGSIVFEQFASICGVYGLSFLLLFISSTFLILVNYYKYKNSKEFKTSIASLICIAFIYRFGLYRIGYINQSQNELKPKNLSVLMIQPDTSPGTKDLKADASYLSATMSKVFSLAIPTFENSPSLIVIPESAIPFHGTIDSEENRKEKIYSSTMEGIILYLSKHTGADVLFNELNLDENKLRNQVSLFKNLDGKTERYNKRRLLPFGEYLPMEKNFPFLRSIFQETSRYVPGEFPKLLIGNKIQNQRSFLPPEISKLNEPKTYRYEFSSIVEHTNKIRNLEYSYSILPLLCYEAMFTELVLDYFQNEQKPEVLINITNDSWFDSELEAYQHSGAVRLRAIETGLPLIRSAVSGISEVWDARGIPMIVPIGFHETGTRAFSIRLDAIESTIYTRFGNSFLWIFCILILISRLIFVSRIERKS</sequence>